<organism>
    <name type="scientific">Paracoccus denitrificans</name>
    <dbReference type="NCBI Taxonomy" id="266"/>
    <lineage>
        <taxon>Bacteria</taxon>
        <taxon>Pseudomonadati</taxon>
        <taxon>Pseudomonadota</taxon>
        <taxon>Alphaproteobacteria</taxon>
        <taxon>Rhodobacterales</taxon>
        <taxon>Paracoccaceae</taxon>
        <taxon>Paracoccus</taxon>
    </lineage>
</organism>
<reference key="1">
    <citation type="journal article" date="1990" name="FEBS Lett.">
        <title>Are there isoenzymes of cytochrome c oxidase in Paracoccus denitrificans?</title>
        <authorList>
            <person name="Raitio M."/>
            <person name="Pispa J.M."/>
            <person name="Metso T."/>
            <person name="Saraste M."/>
        </authorList>
    </citation>
    <scope>NUCLEOTIDE SEQUENCE [GENOMIC DNA]</scope>
    <source>
        <strain>Pd 1222</strain>
    </source>
</reference>
<reference key="2">
    <citation type="journal article" date="1995" name="Nature">
        <title>Structure at 2.8-A resolution of cytochrome c oxidase from Paracoccus denitrificans.</title>
        <authorList>
            <person name="Iwata S."/>
            <person name="Ostermeier C."/>
            <person name="Ludwig B."/>
            <person name="Michel H."/>
        </authorList>
    </citation>
    <scope>X-RAY CRYSTALLOGRAPHY (2.8 ANGSTROMS)</scope>
</reference>
<reference key="3">
    <citation type="journal article" date="1997" name="Proc. Natl. Acad. Sci. U.S.A.">
        <title>Structure at 2.7-A resolution of the Paracoccus denitrificans two-subunit cytochrome c oxidase complexed with an antibody FV fragment.</title>
        <authorList>
            <person name="Ostermeier C."/>
            <person name="Harrenga A."/>
            <person name="Ermler U."/>
            <person name="Michel H."/>
        </authorList>
    </citation>
    <scope>X-RAY CRYSTALLOGRAPHY (2.7 ANGSTROMS)</scope>
</reference>
<reference key="4">
    <citation type="journal article" date="1999" name="Protein Sci.">
        <title>Evidence for a copper-coordinated histidine-tyrosine cross-link in the active site of cytochrome oxidase.</title>
        <authorList>
            <person name="Buse G."/>
            <person name="Soulimane T."/>
            <person name="Dewor M."/>
            <person name="Meyer H.E."/>
            <person name="Blueggel M."/>
        </authorList>
    </citation>
    <scope>COVALENT BOND</scope>
</reference>
<reference key="5">
    <citation type="journal article" date="1996" name="Curr. Opin. Struct. Biol.">
        <title>Cytochrome c oxidase.</title>
        <authorList>
            <person name="Ostermeier C."/>
            <person name="Iwata S."/>
            <person name="Michel H."/>
        </authorList>
    </citation>
    <scope>REVIEW</scope>
</reference>
<name>COX1B_PARDE</name>
<keyword id="KW-0002">3D-structure</keyword>
<keyword id="KW-0997">Cell inner membrane</keyword>
<keyword id="KW-1003">Cell membrane</keyword>
<keyword id="KW-0186">Copper</keyword>
<keyword id="KW-1015">Disulfide bond</keyword>
<keyword id="KW-0249">Electron transport</keyword>
<keyword id="KW-0349">Heme</keyword>
<keyword id="KW-0375">Hydrogen ion transport</keyword>
<keyword id="KW-0406">Ion transport</keyword>
<keyword id="KW-0408">Iron</keyword>
<keyword id="KW-0472">Membrane</keyword>
<keyword id="KW-0479">Metal-binding</keyword>
<keyword id="KW-0679">Respiratory chain</keyword>
<keyword id="KW-1278">Translocase</keyword>
<keyword id="KW-0812">Transmembrane</keyword>
<keyword id="KW-1133">Transmembrane helix</keyword>
<keyword id="KW-0813">Transport</keyword>
<gene>
    <name type="primary">ctaDII</name>
</gene>
<proteinExistence type="evidence at protein level"/>
<accession>P98002</accession>
<sequence>MADAAVHGHGDHHDTRGFFTRWFMSTNHKDIGILYLFTAGIVGLISVCFTVYMRMELQHPGVQYMCLEGARLIADASAECTPNGHLWNVMITYHGVLMMFFVVIPALFGGFGNYFMPLHIGAPDMAFPRLNNLSYWMYVCGVALGVASLLAPGGNDQMGSGVGWVLYPPLSTTEAGYSMDLAIFAVHVSGASSILGAINIITTFLNMRAPGMTLFKVPLFAWSVFITAWLILLSLPVLAGAITMLLMDRNFGTQFFDPAGGGDPVLYQHILWFFGHPEVYIIILPGFGIISHVISTFAKKPIFGYLPMVLAMAAIGILGFVVWAHHMYTAGMSLTQQAYFMLATMTIAVPTGIKVFSWIATMWGGSIEFKTPMLWAFGFLFLFTVGGVTGVVLSQAPLDRVYHDTYYVVAHFHYVMSLGAVFGIFAGVYYWIGKMSGRQYPEWAGQLHFWMMFIGSNLIFFPQHFLGRQGMPRRYIDYPVEFAYWNNISSIGAYISFASFLFFIGIVFYTLFAGKRVNVPNYWNEHADTLEWTLPSPPPEHTFETLPKREDWDRAHAH</sequence>
<evidence type="ECO:0000305" key="1"/>
<evidence type="ECO:0007829" key="2">
    <source>
        <dbReference type="PDB" id="1QLE"/>
    </source>
</evidence>
<evidence type="ECO:0007829" key="3">
    <source>
        <dbReference type="PDB" id="3EHB"/>
    </source>
</evidence>
<evidence type="ECO:0007829" key="4">
    <source>
        <dbReference type="PDB" id="3HB3"/>
    </source>
</evidence>
<evidence type="ECO:0007829" key="5">
    <source>
        <dbReference type="PDB" id="7ATE"/>
    </source>
</evidence>
<evidence type="ECO:0007829" key="6">
    <source>
        <dbReference type="PDB" id="7AU6"/>
    </source>
</evidence>
<protein>
    <recommendedName>
        <fullName>Cytochrome c oxidase subunit 1-beta</fullName>
        <ecNumber>7.1.1.9</ecNumber>
    </recommendedName>
    <alternativeName>
        <fullName>Cytochrome aa3 subunit 1-beta</fullName>
    </alternativeName>
    <alternativeName>
        <fullName>Cytochrome c oxidase polypeptide I-beta</fullName>
    </alternativeName>
</protein>
<feature type="chain" id="PRO_0000183456" description="Cytochrome c oxidase subunit 1-beta">
    <location>
        <begin position="1"/>
        <end position="558"/>
    </location>
</feature>
<feature type="topological domain" description="Cytoplasmic">
    <location>
        <begin position="1"/>
        <end position="28"/>
    </location>
</feature>
<feature type="transmembrane region" description="Helical; Name=I">
    <location>
        <begin position="29"/>
        <end position="59"/>
    </location>
</feature>
<feature type="topological domain" description="Periplasmic">
    <location>
        <begin position="60"/>
        <end position="82"/>
    </location>
</feature>
<feature type="transmembrane region" description="Helical; Name=II">
    <location>
        <begin position="83"/>
        <end position="120"/>
    </location>
</feature>
<feature type="topological domain" description="Cytoplasmic">
    <location>
        <begin position="121"/>
        <end position="126"/>
    </location>
</feature>
<feature type="transmembrane region" description="Helical; Name=III">
    <location>
        <begin position="127"/>
        <end position="151"/>
    </location>
</feature>
<feature type="topological domain" description="Periplasmic">
    <location>
        <begin position="152"/>
        <end position="176"/>
    </location>
</feature>
<feature type="transmembrane region" description="Helical; Name=IV">
    <location>
        <begin position="177"/>
        <end position="206"/>
    </location>
</feature>
<feature type="topological domain" description="Cytoplasmic">
    <location>
        <begin position="207"/>
        <end position="217"/>
    </location>
</feature>
<feature type="transmembrane region" description="Helical; Name=V">
    <location>
        <begin position="218"/>
        <end position="251"/>
    </location>
</feature>
<feature type="topological domain" description="Periplasmic">
    <location>
        <begin position="252"/>
        <end position="262"/>
    </location>
</feature>
<feature type="transmembrane region" description="Helical; Name=VI">
    <location>
        <begin position="263"/>
        <end position="299"/>
    </location>
</feature>
<feature type="topological domain" description="Cytoplasmic">
    <location>
        <begin position="300"/>
        <end position="303"/>
    </location>
</feature>
<feature type="transmembrane region" description="Helical; Name=VII">
    <location>
        <begin position="304"/>
        <end position="331"/>
    </location>
</feature>
<feature type="topological domain" description="Periplasmic">
    <location>
        <position position="332"/>
    </location>
</feature>
<feature type="transmembrane region" description="Helical; Name=VIII">
    <location>
        <begin position="333"/>
        <end position="364"/>
    </location>
</feature>
<feature type="topological domain" description="Cytoplasmic">
    <location>
        <begin position="365"/>
        <end position="369"/>
    </location>
</feature>
<feature type="transmembrane region" description="Helical; Name=IX">
    <location>
        <begin position="370"/>
        <end position="395"/>
    </location>
</feature>
<feature type="topological domain" description="Periplasmic">
    <location>
        <begin position="396"/>
        <end position="404"/>
    </location>
</feature>
<feature type="transmembrane region" description="Helical; Name=X">
    <location>
        <begin position="405"/>
        <end position="437"/>
    </location>
</feature>
<feature type="topological domain" description="Cytoplasmic">
    <location>
        <begin position="438"/>
        <end position="440"/>
    </location>
</feature>
<feature type="transmembrane region" description="Helical; Name=XI">
    <location>
        <begin position="441"/>
        <end position="469"/>
    </location>
</feature>
<feature type="topological domain" description="Periplasmic">
    <location>
        <begin position="470"/>
        <end position="478"/>
    </location>
</feature>
<feature type="transmembrane region" description="Helical; Name=XII">
    <location>
        <begin position="479"/>
        <end position="514"/>
    </location>
</feature>
<feature type="topological domain" description="Cytoplasmic">
    <location>
        <begin position="515"/>
        <end position="558"/>
    </location>
</feature>
<feature type="binding site" description="axial binding residue">
    <location>
        <position position="94"/>
    </location>
    <ligand>
        <name>Fe(II)-heme a</name>
        <dbReference type="ChEBI" id="CHEBI:61715"/>
    </ligand>
    <ligandPart>
        <name>Fe</name>
        <dbReference type="ChEBI" id="CHEBI:18248"/>
    </ligandPart>
</feature>
<feature type="binding site">
    <location>
        <position position="276"/>
    </location>
    <ligand>
        <name>Cu cation</name>
        <dbReference type="ChEBI" id="CHEBI:23378"/>
        <label>B</label>
    </ligand>
</feature>
<feature type="binding site">
    <location>
        <position position="280"/>
    </location>
    <ligand>
        <name>Cu cation</name>
        <dbReference type="ChEBI" id="CHEBI:23378"/>
        <label>B</label>
    </ligand>
</feature>
<feature type="binding site">
    <location>
        <position position="325"/>
    </location>
    <ligand>
        <name>Cu cation</name>
        <dbReference type="ChEBI" id="CHEBI:23378"/>
        <label>B</label>
    </ligand>
</feature>
<feature type="binding site">
    <location>
        <position position="326"/>
    </location>
    <ligand>
        <name>Cu cation</name>
        <dbReference type="ChEBI" id="CHEBI:23378"/>
        <label>B</label>
    </ligand>
</feature>
<feature type="binding site" description="axial binding residue">
    <location>
        <position position="411"/>
    </location>
    <ligand>
        <name>heme a3</name>
        <dbReference type="ChEBI" id="CHEBI:83282"/>
    </ligand>
    <ligandPart>
        <name>Fe</name>
        <dbReference type="ChEBI" id="CHEBI:18248"/>
    </ligandPart>
</feature>
<feature type="binding site" description="axial binding residue">
    <location>
        <position position="413"/>
    </location>
    <ligand>
        <name>Fe(II)-heme a</name>
        <dbReference type="ChEBI" id="CHEBI:61715"/>
    </ligand>
    <ligandPart>
        <name>Fe</name>
        <dbReference type="ChEBI" id="CHEBI:18248"/>
    </ligandPart>
</feature>
<feature type="disulfide bond">
    <location>
        <begin position="66"/>
        <end position="80"/>
    </location>
</feature>
<feature type="cross-link" description="1'-histidyl-3'-tyrosine (His-Tyr)">
    <location>
        <begin position="276"/>
        <end position="280"/>
    </location>
</feature>
<feature type="helix" evidence="4">
    <location>
        <begin position="19"/>
        <end position="21"/>
    </location>
</feature>
<feature type="turn" evidence="4">
    <location>
        <begin position="22"/>
        <end position="24"/>
    </location>
</feature>
<feature type="helix" evidence="4">
    <location>
        <begin position="28"/>
        <end position="57"/>
    </location>
</feature>
<feature type="strand" evidence="4">
    <location>
        <begin position="59"/>
        <end position="61"/>
    </location>
</feature>
<feature type="strand" evidence="4">
    <location>
        <begin position="63"/>
        <end position="66"/>
    </location>
</feature>
<feature type="strand" evidence="5">
    <location>
        <begin position="76"/>
        <end position="78"/>
    </location>
</feature>
<feature type="helix" evidence="4">
    <location>
        <begin position="84"/>
        <end position="101"/>
    </location>
</feature>
<feature type="helix" evidence="4">
    <location>
        <begin position="103"/>
        <end position="107"/>
    </location>
</feature>
<feature type="turn" evidence="4">
    <location>
        <begin position="108"/>
        <end position="110"/>
    </location>
</feature>
<feature type="helix" evidence="4">
    <location>
        <begin position="111"/>
        <end position="119"/>
    </location>
</feature>
<feature type="helix" evidence="4">
    <location>
        <begin position="128"/>
        <end position="150"/>
    </location>
</feature>
<feature type="strand" evidence="4">
    <location>
        <begin position="151"/>
        <end position="153"/>
    </location>
</feature>
<feature type="helix" evidence="4">
    <location>
        <begin position="154"/>
        <end position="156"/>
    </location>
</feature>
<feature type="strand" evidence="4">
    <location>
        <begin position="157"/>
        <end position="159"/>
    </location>
</feature>
<feature type="turn" evidence="4">
    <location>
        <begin position="163"/>
        <end position="166"/>
    </location>
</feature>
<feature type="helix" evidence="4">
    <location>
        <begin position="170"/>
        <end position="173"/>
    </location>
</feature>
<feature type="strand" evidence="4">
    <location>
        <begin position="175"/>
        <end position="177"/>
    </location>
</feature>
<feature type="helix" evidence="4">
    <location>
        <begin position="178"/>
        <end position="206"/>
    </location>
</feature>
<feature type="helix" evidence="4">
    <location>
        <begin position="214"/>
        <end position="216"/>
    </location>
</feature>
<feature type="helix" evidence="4">
    <location>
        <begin position="219"/>
        <end position="250"/>
    </location>
</feature>
<feature type="strand" evidence="2">
    <location>
        <begin position="254"/>
        <end position="256"/>
    </location>
</feature>
<feature type="helix" evidence="4">
    <location>
        <begin position="258"/>
        <end position="260"/>
    </location>
</feature>
<feature type="helix" evidence="4">
    <location>
        <begin position="264"/>
        <end position="298"/>
    </location>
</feature>
<feature type="helix" evidence="4">
    <location>
        <begin position="305"/>
        <end position="318"/>
    </location>
</feature>
<feature type="helix" evidence="4">
    <location>
        <begin position="323"/>
        <end position="326"/>
    </location>
</feature>
<feature type="turn" evidence="6">
    <location>
        <begin position="328"/>
        <end position="331"/>
    </location>
</feature>
<feature type="helix" evidence="4">
    <location>
        <begin position="334"/>
        <end position="345"/>
    </location>
</feature>
<feature type="helix" evidence="4">
    <location>
        <begin position="348"/>
        <end position="362"/>
    </location>
</feature>
<feature type="helix" evidence="4">
    <location>
        <begin position="371"/>
        <end position="394"/>
    </location>
</feature>
<feature type="helix" evidence="4">
    <location>
        <begin position="396"/>
        <end position="402"/>
    </location>
</feature>
<feature type="strand" evidence="2">
    <location>
        <begin position="403"/>
        <end position="405"/>
    </location>
</feature>
<feature type="helix" evidence="4">
    <location>
        <begin position="406"/>
        <end position="417"/>
    </location>
</feature>
<feature type="helix" evidence="4">
    <location>
        <begin position="420"/>
        <end position="436"/>
    </location>
</feature>
<feature type="strand" evidence="3">
    <location>
        <begin position="437"/>
        <end position="439"/>
    </location>
</feature>
<feature type="helix" evidence="4">
    <location>
        <begin position="442"/>
        <end position="460"/>
    </location>
</feature>
<feature type="helix" evidence="4">
    <location>
        <begin position="462"/>
        <end position="468"/>
    </location>
</feature>
<feature type="strand" evidence="4">
    <location>
        <begin position="472"/>
        <end position="474"/>
    </location>
</feature>
<feature type="helix" evidence="4">
    <location>
        <begin position="480"/>
        <end position="482"/>
    </location>
</feature>
<feature type="helix" evidence="4">
    <location>
        <begin position="483"/>
        <end position="513"/>
    </location>
</feature>
<feature type="strand" evidence="3">
    <location>
        <begin position="514"/>
        <end position="516"/>
    </location>
</feature>
<feature type="helix" evidence="4">
    <location>
        <begin position="530"/>
        <end position="533"/>
    </location>
</feature>
<feature type="strand" evidence="2">
    <location>
        <begin position="540"/>
        <end position="542"/>
    </location>
</feature>
<feature type="helix" evidence="5">
    <location>
        <begin position="549"/>
        <end position="552"/>
    </location>
</feature>
<comment type="function">
    <text>Subunit I and II form the functional core of the enzyme complex. Electrons originating in cytochrome c are transferred via heme a and Cu(A) to the binuclear center formed by heme a3 and Cu(B). This cytochrome c oxidase shows proton pump activity across the membrane in addition to the electron transfer.</text>
</comment>
<comment type="catalytic activity">
    <reaction>
        <text>4 Fe(II)-[cytochrome c] + O2 + 8 H(+)(in) = 4 Fe(III)-[cytochrome c] + 2 H2O + 4 H(+)(out)</text>
        <dbReference type="Rhea" id="RHEA:11436"/>
        <dbReference type="Rhea" id="RHEA-COMP:10350"/>
        <dbReference type="Rhea" id="RHEA-COMP:14399"/>
        <dbReference type="ChEBI" id="CHEBI:15377"/>
        <dbReference type="ChEBI" id="CHEBI:15378"/>
        <dbReference type="ChEBI" id="CHEBI:15379"/>
        <dbReference type="ChEBI" id="CHEBI:29033"/>
        <dbReference type="ChEBI" id="CHEBI:29034"/>
        <dbReference type="EC" id="7.1.1.9"/>
    </reaction>
</comment>
<comment type="cofactor">
    <cofactor>
        <name>Cu(2+)</name>
        <dbReference type="ChEBI" id="CHEBI:29036"/>
    </cofactor>
    <text>Binds 1 copper B ion per subunit.</text>
</comment>
<comment type="cofactor">
    <cofactor>
        <name>heme</name>
        <dbReference type="ChEBI" id="CHEBI:30413"/>
    </cofactor>
    <text>Binds 2 heme groups per subunit.</text>
</comment>
<comment type="pathway">
    <text>Energy metabolism; oxidative phosphorylation.</text>
</comment>
<comment type="subcellular location">
    <subcellularLocation>
        <location>Cell inner membrane</location>
        <topology>Multi-pass membrane protein</topology>
    </subcellularLocation>
</comment>
<comment type="PTM">
    <text>His-276 and Tyr-280 are involved in the formation of a copper-coordinated covalent cross-link at the active site of the catalytic subunit I.</text>
</comment>
<comment type="similarity">
    <text evidence="1">Belongs to the heme-copper respiratory oxidase family.</text>
</comment>
<dbReference type="EC" id="7.1.1.9"/>
<dbReference type="EMBL" id="Y07533">
    <property type="protein sequence ID" value="CAA68821.1"/>
    <property type="molecule type" value="Genomic_DNA"/>
</dbReference>
<dbReference type="PIR" id="S08270">
    <property type="entry name" value="S08270"/>
</dbReference>
<dbReference type="PDB" id="1AR1">
    <property type="method" value="X-ray"/>
    <property type="resolution" value="2.70 A"/>
    <property type="chains" value="A=1-558"/>
</dbReference>
<dbReference type="PDB" id="1QLE">
    <property type="method" value="X-ray"/>
    <property type="resolution" value="3.00 A"/>
    <property type="chains" value="A=17-554"/>
</dbReference>
<dbReference type="PDB" id="3EHB">
    <property type="method" value="X-ray"/>
    <property type="resolution" value="2.32 A"/>
    <property type="chains" value="A=1-558"/>
</dbReference>
<dbReference type="PDB" id="3HB3">
    <property type="method" value="X-ray"/>
    <property type="resolution" value="2.25 A"/>
    <property type="chains" value="A=1-558"/>
</dbReference>
<dbReference type="PDB" id="7ATE">
    <property type="method" value="EM"/>
    <property type="resolution" value="2.40 A"/>
    <property type="chains" value="A=1-558"/>
</dbReference>
<dbReference type="PDB" id="7ATN">
    <property type="method" value="EM"/>
    <property type="resolution" value="2.66 A"/>
    <property type="chains" value="A=1-558"/>
</dbReference>
<dbReference type="PDB" id="7AU3">
    <property type="method" value="EM"/>
    <property type="resolution" value="2.56 A"/>
    <property type="chains" value="A=1-558"/>
</dbReference>
<dbReference type="PDB" id="7AU6">
    <property type="method" value="EM"/>
    <property type="resolution" value="2.40 A"/>
    <property type="chains" value="A=1-558"/>
</dbReference>
<dbReference type="PDBsum" id="1AR1"/>
<dbReference type="PDBsum" id="1QLE"/>
<dbReference type="PDBsum" id="3EHB"/>
<dbReference type="PDBsum" id="3HB3"/>
<dbReference type="PDBsum" id="7ATE"/>
<dbReference type="PDBsum" id="7ATN"/>
<dbReference type="PDBsum" id="7AU3"/>
<dbReference type="PDBsum" id="7AU6"/>
<dbReference type="EMDB" id="EMD-11921"/>
<dbReference type="EMDB" id="EMD-11922"/>
<dbReference type="EMDB" id="EMD-11924"/>
<dbReference type="EMDB" id="EMD-11925"/>
<dbReference type="SMR" id="P98002"/>
<dbReference type="DIP" id="DIP-6088N"/>
<dbReference type="IntAct" id="P98002">
    <property type="interactions" value="1"/>
</dbReference>
<dbReference type="DrugBank" id="DB04147">
    <property type="generic name" value="Dodecyldimethylamine N-oxide"/>
</dbReference>
<dbReference type="TCDB" id="3.D.4.6.1">
    <property type="family name" value="the proton-translocating cytochrome oxidase (cox) superfamily"/>
</dbReference>
<dbReference type="OMA" id="RRYYTYP"/>
<dbReference type="BRENDA" id="7.1.1.9">
    <property type="organism ID" value="3341"/>
</dbReference>
<dbReference type="UniPathway" id="UPA00705"/>
<dbReference type="EvolutionaryTrace" id="P98002"/>
<dbReference type="GO" id="GO:0005886">
    <property type="term" value="C:plasma membrane"/>
    <property type="evidence" value="ECO:0007669"/>
    <property type="project" value="UniProtKB-SubCell"/>
</dbReference>
<dbReference type="GO" id="GO:0045277">
    <property type="term" value="C:respiratory chain complex IV"/>
    <property type="evidence" value="ECO:0007669"/>
    <property type="project" value="InterPro"/>
</dbReference>
<dbReference type="GO" id="GO:0004129">
    <property type="term" value="F:cytochrome-c oxidase activity"/>
    <property type="evidence" value="ECO:0007669"/>
    <property type="project" value="UniProtKB-EC"/>
</dbReference>
<dbReference type="GO" id="GO:0020037">
    <property type="term" value="F:heme binding"/>
    <property type="evidence" value="ECO:0007669"/>
    <property type="project" value="InterPro"/>
</dbReference>
<dbReference type="GO" id="GO:0046872">
    <property type="term" value="F:metal ion binding"/>
    <property type="evidence" value="ECO:0007669"/>
    <property type="project" value="UniProtKB-KW"/>
</dbReference>
<dbReference type="GO" id="GO:0015990">
    <property type="term" value="P:electron transport coupled proton transport"/>
    <property type="evidence" value="ECO:0007669"/>
    <property type="project" value="InterPro"/>
</dbReference>
<dbReference type="GO" id="GO:0006119">
    <property type="term" value="P:oxidative phosphorylation"/>
    <property type="evidence" value="ECO:0007669"/>
    <property type="project" value="UniProtKB-UniPathway"/>
</dbReference>
<dbReference type="GO" id="GO:0022904">
    <property type="term" value="P:respiratory electron transport chain"/>
    <property type="evidence" value="ECO:0007669"/>
    <property type="project" value="TreeGrafter"/>
</dbReference>
<dbReference type="CDD" id="cd01663">
    <property type="entry name" value="Cyt_c_Oxidase_I"/>
    <property type="match status" value="1"/>
</dbReference>
<dbReference type="FunFam" id="1.20.210.10:FF:000004">
    <property type="entry name" value="Cytochrome c oxidase subunit 1"/>
    <property type="match status" value="1"/>
</dbReference>
<dbReference type="Gene3D" id="1.20.210.10">
    <property type="entry name" value="Cytochrome c oxidase-like, subunit I domain"/>
    <property type="match status" value="1"/>
</dbReference>
<dbReference type="InterPro" id="IPR023616">
    <property type="entry name" value="Cyt_c_oxase-like_su1_dom"/>
</dbReference>
<dbReference type="InterPro" id="IPR036927">
    <property type="entry name" value="Cyt_c_oxase-like_su1_sf"/>
</dbReference>
<dbReference type="InterPro" id="IPR000883">
    <property type="entry name" value="Cyt_C_Oxase_1"/>
</dbReference>
<dbReference type="InterPro" id="IPR023615">
    <property type="entry name" value="Cyt_c_Oxase_su1_BS"/>
</dbReference>
<dbReference type="InterPro" id="IPR033944">
    <property type="entry name" value="Cyt_c_oxase_su1_dom"/>
</dbReference>
<dbReference type="InterPro" id="IPR014241">
    <property type="entry name" value="Cyt_c_oxidase_su1_bac"/>
</dbReference>
<dbReference type="NCBIfam" id="TIGR02891">
    <property type="entry name" value="CtaD_CoxA"/>
    <property type="match status" value="1"/>
</dbReference>
<dbReference type="PANTHER" id="PTHR10422">
    <property type="entry name" value="CYTOCHROME C OXIDASE SUBUNIT 1"/>
    <property type="match status" value="1"/>
</dbReference>
<dbReference type="PANTHER" id="PTHR10422:SF18">
    <property type="entry name" value="CYTOCHROME C OXIDASE SUBUNIT 1"/>
    <property type="match status" value="1"/>
</dbReference>
<dbReference type="Pfam" id="PF00115">
    <property type="entry name" value="COX1"/>
    <property type="match status" value="1"/>
</dbReference>
<dbReference type="PRINTS" id="PR01165">
    <property type="entry name" value="CYCOXIDASEI"/>
</dbReference>
<dbReference type="SUPFAM" id="SSF81442">
    <property type="entry name" value="Cytochrome c oxidase subunit I-like"/>
    <property type="match status" value="1"/>
</dbReference>
<dbReference type="PROSITE" id="PS50855">
    <property type="entry name" value="COX1"/>
    <property type="match status" value="1"/>
</dbReference>
<dbReference type="PROSITE" id="PS00077">
    <property type="entry name" value="COX1_CUB"/>
    <property type="match status" value="1"/>
</dbReference>